<protein>
    <recommendedName>
        <fullName evidence="1">Octanoyltransferase</fullName>
        <ecNumber evidence="1">2.3.1.181</ecNumber>
    </recommendedName>
    <alternativeName>
        <fullName evidence="1">Lipoate-protein ligase B</fullName>
    </alternativeName>
    <alternativeName>
        <fullName evidence="1">Lipoyl/octanoyl transferase</fullName>
    </alternativeName>
    <alternativeName>
        <fullName evidence="1">Octanoyl-[acyl-carrier-protein]-protein N-octanoyltransferase</fullName>
    </alternativeName>
</protein>
<feature type="chain" id="PRO_1000001101" description="Octanoyltransferase">
    <location>
        <begin position="1"/>
        <end position="206"/>
    </location>
</feature>
<feature type="domain" description="BPL/LPL catalytic" evidence="2">
    <location>
        <begin position="30"/>
        <end position="206"/>
    </location>
</feature>
<feature type="active site" description="Acyl-thioester intermediate" evidence="1">
    <location>
        <position position="168"/>
    </location>
</feature>
<feature type="binding site" evidence="1">
    <location>
        <begin position="69"/>
        <end position="76"/>
    </location>
    <ligand>
        <name>substrate</name>
    </ligand>
</feature>
<feature type="binding site" evidence="1">
    <location>
        <begin position="137"/>
        <end position="139"/>
    </location>
    <ligand>
        <name>substrate</name>
    </ligand>
</feature>
<feature type="binding site" evidence="1">
    <location>
        <begin position="150"/>
        <end position="152"/>
    </location>
    <ligand>
        <name>substrate</name>
    </ligand>
</feature>
<feature type="site" description="Lowers pKa of active site Cys" evidence="1">
    <location>
        <position position="134"/>
    </location>
</feature>
<reference key="1">
    <citation type="journal article" date="2007" name="Genome Biol.">
        <title>Comparison of Francisella tularensis genomes reveals evolutionary events associated with the emergence of human pathogenic strains.</title>
        <authorList>
            <person name="Rohmer L."/>
            <person name="Fong C."/>
            <person name="Abmayr S."/>
            <person name="Wasnick M."/>
            <person name="Larson Freeman T.J."/>
            <person name="Radey M."/>
            <person name="Guina T."/>
            <person name="Svensson K."/>
            <person name="Hayden H.S."/>
            <person name="Jacobs M."/>
            <person name="Gallagher L.A."/>
            <person name="Manoil C."/>
            <person name="Ernst R.K."/>
            <person name="Drees B."/>
            <person name="Buckley D."/>
            <person name="Haugen E."/>
            <person name="Bovee D."/>
            <person name="Zhou Y."/>
            <person name="Chang J."/>
            <person name="Levy R."/>
            <person name="Lim R."/>
            <person name="Gillett W."/>
            <person name="Guenthener D."/>
            <person name="Kang A."/>
            <person name="Shaffer S.A."/>
            <person name="Taylor G."/>
            <person name="Chen J."/>
            <person name="Gallis B."/>
            <person name="D'Argenio D.A."/>
            <person name="Forsman M."/>
            <person name="Olson M.V."/>
            <person name="Goodlett D.R."/>
            <person name="Kaul R."/>
            <person name="Miller S.I."/>
            <person name="Brittnacher M.J."/>
        </authorList>
    </citation>
    <scope>NUCLEOTIDE SEQUENCE [LARGE SCALE GENOMIC DNA]</scope>
    <source>
        <strain>U112</strain>
    </source>
</reference>
<organism>
    <name type="scientific">Francisella tularensis subsp. novicida (strain U112)</name>
    <dbReference type="NCBI Taxonomy" id="401614"/>
    <lineage>
        <taxon>Bacteria</taxon>
        <taxon>Pseudomonadati</taxon>
        <taxon>Pseudomonadota</taxon>
        <taxon>Gammaproteobacteria</taxon>
        <taxon>Thiotrichales</taxon>
        <taxon>Francisellaceae</taxon>
        <taxon>Francisella</taxon>
    </lineage>
</organism>
<proteinExistence type="inferred from homology"/>
<comment type="function">
    <text evidence="1">Catalyzes the transfer of endogenously produced octanoic acid from octanoyl-acyl-carrier-protein onto the lipoyl domains of lipoate-dependent enzymes. Lipoyl-ACP can also act as a substrate although octanoyl-ACP is likely to be the physiological substrate.</text>
</comment>
<comment type="catalytic activity">
    <reaction evidence="1">
        <text>octanoyl-[ACP] + L-lysyl-[protein] = N(6)-octanoyl-L-lysyl-[protein] + holo-[ACP] + H(+)</text>
        <dbReference type="Rhea" id="RHEA:17665"/>
        <dbReference type="Rhea" id="RHEA-COMP:9636"/>
        <dbReference type="Rhea" id="RHEA-COMP:9685"/>
        <dbReference type="Rhea" id="RHEA-COMP:9752"/>
        <dbReference type="Rhea" id="RHEA-COMP:9928"/>
        <dbReference type="ChEBI" id="CHEBI:15378"/>
        <dbReference type="ChEBI" id="CHEBI:29969"/>
        <dbReference type="ChEBI" id="CHEBI:64479"/>
        <dbReference type="ChEBI" id="CHEBI:78463"/>
        <dbReference type="ChEBI" id="CHEBI:78809"/>
        <dbReference type="EC" id="2.3.1.181"/>
    </reaction>
</comment>
<comment type="pathway">
    <text evidence="1">Protein modification; protein lipoylation via endogenous pathway; protein N(6)-(lipoyl)lysine from octanoyl-[acyl-carrier-protein]: step 1/2.</text>
</comment>
<comment type="subcellular location">
    <subcellularLocation>
        <location evidence="1">Cytoplasm</location>
    </subcellularLocation>
</comment>
<comment type="miscellaneous">
    <text evidence="1">In the reaction, the free carboxyl group of octanoic acid is attached via an amide linkage to the epsilon-amino group of a specific lysine residue of lipoyl domains of lipoate-dependent enzymes.</text>
</comment>
<comment type="similarity">
    <text evidence="1">Belongs to the LipB family.</text>
</comment>
<keyword id="KW-0012">Acyltransferase</keyword>
<keyword id="KW-0963">Cytoplasm</keyword>
<keyword id="KW-0808">Transferase</keyword>
<sequence>MNNIYQKDLGLQQYNKVFENMLEFTSTRTPETNDEIWLVEHPAVFTQGKHGKPEHILNSHNIPIVATDRGGQVTYHGPGQAVIYFLLDIKRNKLGAKKLVTTVEQACINMLDKYYNLKAHIIDGAHGIYINNQKIASLGLRIKQGKSYHGIAINTNMDLTPFSYINPCGYSGLKMCQLANFYQEADIKKVQQQYTAEFVTLLNNSI</sequence>
<gene>
    <name evidence="1" type="primary">lipB</name>
    <name type="ordered locus">FTN_0909</name>
</gene>
<name>LIPB_FRATN</name>
<dbReference type="EC" id="2.3.1.181" evidence="1"/>
<dbReference type="EMBL" id="CP000439">
    <property type="protein sequence ID" value="ABK89797.1"/>
    <property type="molecule type" value="Genomic_DNA"/>
</dbReference>
<dbReference type="RefSeq" id="WP_003039232.1">
    <property type="nucleotide sequence ID" value="NC_008601.1"/>
</dbReference>
<dbReference type="SMR" id="A0Q6D2"/>
<dbReference type="KEGG" id="ftn:FTN_0909"/>
<dbReference type="KEGG" id="ftx:AW25_1109"/>
<dbReference type="BioCyc" id="FTUL401614:G1G75-947-MONOMER"/>
<dbReference type="UniPathway" id="UPA00538">
    <property type="reaction ID" value="UER00592"/>
</dbReference>
<dbReference type="Proteomes" id="UP000000762">
    <property type="component" value="Chromosome"/>
</dbReference>
<dbReference type="GO" id="GO:0005737">
    <property type="term" value="C:cytoplasm"/>
    <property type="evidence" value="ECO:0007669"/>
    <property type="project" value="UniProtKB-SubCell"/>
</dbReference>
<dbReference type="GO" id="GO:0033819">
    <property type="term" value="F:lipoyl(octanoyl) transferase activity"/>
    <property type="evidence" value="ECO:0007669"/>
    <property type="project" value="UniProtKB-EC"/>
</dbReference>
<dbReference type="GO" id="GO:0036211">
    <property type="term" value="P:protein modification process"/>
    <property type="evidence" value="ECO:0007669"/>
    <property type="project" value="InterPro"/>
</dbReference>
<dbReference type="CDD" id="cd16444">
    <property type="entry name" value="LipB"/>
    <property type="match status" value="1"/>
</dbReference>
<dbReference type="FunFam" id="3.30.930.10:FF:000020">
    <property type="entry name" value="Octanoyltransferase"/>
    <property type="match status" value="1"/>
</dbReference>
<dbReference type="Gene3D" id="3.30.930.10">
    <property type="entry name" value="Bira Bifunctional Protein, Domain 2"/>
    <property type="match status" value="1"/>
</dbReference>
<dbReference type="HAMAP" id="MF_00013">
    <property type="entry name" value="LipB"/>
    <property type="match status" value="1"/>
</dbReference>
<dbReference type="InterPro" id="IPR045864">
    <property type="entry name" value="aa-tRNA-synth_II/BPL/LPL"/>
</dbReference>
<dbReference type="InterPro" id="IPR004143">
    <property type="entry name" value="BPL_LPL_catalytic"/>
</dbReference>
<dbReference type="InterPro" id="IPR000544">
    <property type="entry name" value="Octanoyltransferase"/>
</dbReference>
<dbReference type="InterPro" id="IPR020605">
    <property type="entry name" value="Octanoyltransferase_CS"/>
</dbReference>
<dbReference type="NCBIfam" id="TIGR00214">
    <property type="entry name" value="lipB"/>
    <property type="match status" value="1"/>
</dbReference>
<dbReference type="NCBIfam" id="NF010922">
    <property type="entry name" value="PRK14342.1"/>
    <property type="match status" value="1"/>
</dbReference>
<dbReference type="PANTHER" id="PTHR10993:SF7">
    <property type="entry name" value="LIPOYLTRANSFERASE 2, MITOCHONDRIAL-RELATED"/>
    <property type="match status" value="1"/>
</dbReference>
<dbReference type="PANTHER" id="PTHR10993">
    <property type="entry name" value="OCTANOYLTRANSFERASE"/>
    <property type="match status" value="1"/>
</dbReference>
<dbReference type="Pfam" id="PF21948">
    <property type="entry name" value="LplA-B_cat"/>
    <property type="match status" value="1"/>
</dbReference>
<dbReference type="PIRSF" id="PIRSF016262">
    <property type="entry name" value="LPLase"/>
    <property type="match status" value="1"/>
</dbReference>
<dbReference type="SUPFAM" id="SSF55681">
    <property type="entry name" value="Class II aaRS and biotin synthetases"/>
    <property type="match status" value="1"/>
</dbReference>
<dbReference type="PROSITE" id="PS51733">
    <property type="entry name" value="BPL_LPL_CATALYTIC"/>
    <property type="match status" value="1"/>
</dbReference>
<dbReference type="PROSITE" id="PS01313">
    <property type="entry name" value="LIPB"/>
    <property type="match status" value="1"/>
</dbReference>
<evidence type="ECO:0000255" key="1">
    <source>
        <dbReference type="HAMAP-Rule" id="MF_00013"/>
    </source>
</evidence>
<evidence type="ECO:0000255" key="2">
    <source>
        <dbReference type="PROSITE-ProRule" id="PRU01067"/>
    </source>
</evidence>
<accession>A0Q6D2</accession>